<comment type="function">
    <text evidence="1">Binds to DNA and alters its conformation. May be involved in regulation of gene expression, nucleoid organization and DNA protection.</text>
</comment>
<comment type="subunit">
    <text evidence="1">Homodimer.</text>
</comment>
<comment type="subcellular location">
    <subcellularLocation>
        <location evidence="1">Cytoplasm</location>
        <location evidence="1">Nucleoid</location>
    </subcellularLocation>
</comment>
<comment type="similarity">
    <text evidence="1">Belongs to the YbaB/EbfC family.</text>
</comment>
<proteinExistence type="inferred from homology"/>
<gene>
    <name type="ordered locus">Ent638_0951</name>
</gene>
<protein>
    <recommendedName>
        <fullName evidence="1">Nucleoid-associated protein Ent638_0951</fullName>
    </recommendedName>
</protein>
<accession>A4W7F5</accession>
<sequence length="110" mass="11927">MFGGKGGLGGLMKQAQQMQEKMQKAQEEIAQLEVTGESGAGLVKVTINGAHNCRRVEIDPSLLEDDKDMLEDLVAAAFNDAARRIDETQKEKMASVSSGMQLPPGFKMPF</sequence>
<feature type="chain" id="PRO_1000059199" description="Nucleoid-associated protein Ent638_0951">
    <location>
        <begin position="1"/>
        <end position="110"/>
    </location>
</feature>
<evidence type="ECO:0000255" key="1">
    <source>
        <dbReference type="HAMAP-Rule" id="MF_00274"/>
    </source>
</evidence>
<organism>
    <name type="scientific">Enterobacter sp. (strain 638)</name>
    <dbReference type="NCBI Taxonomy" id="399742"/>
    <lineage>
        <taxon>Bacteria</taxon>
        <taxon>Pseudomonadati</taxon>
        <taxon>Pseudomonadota</taxon>
        <taxon>Gammaproteobacteria</taxon>
        <taxon>Enterobacterales</taxon>
        <taxon>Enterobacteriaceae</taxon>
        <taxon>Enterobacter</taxon>
    </lineage>
</organism>
<name>Y951_ENT38</name>
<dbReference type="EMBL" id="CP000653">
    <property type="protein sequence ID" value="ABP59635.1"/>
    <property type="molecule type" value="Genomic_DNA"/>
</dbReference>
<dbReference type="RefSeq" id="WP_012016355.1">
    <property type="nucleotide sequence ID" value="NC_009436.1"/>
</dbReference>
<dbReference type="SMR" id="A4W7F5"/>
<dbReference type="STRING" id="399742.Ent638_0951"/>
<dbReference type="GeneID" id="93308086"/>
<dbReference type="KEGG" id="ent:Ent638_0951"/>
<dbReference type="eggNOG" id="COG0718">
    <property type="taxonomic scope" value="Bacteria"/>
</dbReference>
<dbReference type="HOGENOM" id="CLU_140930_0_0_6"/>
<dbReference type="OrthoDB" id="9808738at2"/>
<dbReference type="Proteomes" id="UP000000230">
    <property type="component" value="Chromosome"/>
</dbReference>
<dbReference type="GO" id="GO:0043590">
    <property type="term" value="C:bacterial nucleoid"/>
    <property type="evidence" value="ECO:0007669"/>
    <property type="project" value="UniProtKB-UniRule"/>
</dbReference>
<dbReference type="GO" id="GO:0005829">
    <property type="term" value="C:cytosol"/>
    <property type="evidence" value="ECO:0007669"/>
    <property type="project" value="TreeGrafter"/>
</dbReference>
<dbReference type="GO" id="GO:0003677">
    <property type="term" value="F:DNA binding"/>
    <property type="evidence" value="ECO:0007669"/>
    <property type="project" value="UniProtKB-UniRule"/>
</dbReference>
<dbReference type="FunFam" id="3.30.1310.10:FF:000001">
    <property type="entry name" value="Nucleoid-associated protein YbaB"/>
    <property type="match status" value="1"/>
</dbReference>
<dbReference type="Gene3D" id="3.30.1310.10">
    <property type="entry name" value="Nucleoid-associated protein YbaB-like domain"/>
    <property type="match status" value="1"/>
</dbReference>
<dbReference type="HAMAP" id="MF_00274">
    <property type="entry name" value="DNA_YbaB_EbfC"/>
    <property type="match status" value="1"/>
</dbReference>
<dbReference type="InterPro" id="IPR036894">
    <property type="entry name" value="YbaB-like_sf"/>
</dbReference>
<dbReference type="InterPro" id="IPR004401">
    <property type="entry name" value="YbaB/EbfC"/>
</dbReference>
<dbReference type="NCBIfam" id="TIGR00103">
    <property type="entry name" value="DNA_YbaB_EbfC"/>
    <property type="match status" value="1"/>
</dbReference>
<dbReference type="PANTHER" id="PTHR33449">
    <property type="entry name" value="NUCLEOID-ASSOCIATED PROTEIN YBAB"/>
    <property type="match status" value="1"/>
</dbReference>
<dbReference type="PANTHER" id="PTHR33449:SF1">
    <property type="entry name" value="NUCLEOID-ASSOCIATED PROTEIN YBAB"/>
    <property type="match status" value="1"/>
</dbReference>
<dbReference type="Pfam" id="PF02575">
    <property type="entry name" value="YbaB_DNA_bd"/>
    <property type="match status" value="1"/>
</dbReference>
<dbReference type="PIRSF" id="PIRSF004555">
    <property type="entry name" value="UCP004555"/>
    <property type="match status" value="1"/>
</dbReference>
<dbReference type="SUPFAM" id="SSF82607">
    <property type="entry name" value="YbaB-like"/>
    <property type="match status" value="1"/>
</dbReference>
<reference key="1">
    <citation type="journal article" date="2010" name="PLoS Genet.">
        <title>Genome sequence of the plant growth promoting endophytic bacterium Enterobacter sp. 638.</title>
        <authorList>
            <person name="Taghavi S."/>
            <person name="van der Lelie D."/>
            <person name="Hoffman A."/>
            <person name="Zhang Y.B."/>
            <person name="Walla M.D."/>
            <person name="Vangronsveld J."/>
            <person name="Newman L."/>
            <person name="Monchy S."/>
        </authorList>
    </citation>
    <scope>NUCLEOTIDE SEQUENCE [LARGE SCALE GENOMIC DNA]</scope>
    <source>
        <strain>638</strain>
    </source>
</reference>
<keyword id="KW-0963">Cytoplasm</keyword>
<keyword id="KW-0238">DNA-binding</keyword>